<evidence type="ECO:0000250" key="1"/>
<evidence type="ECO:0000305" key="2"/>
<organism>
    <name type="scientific">Megalodesulfovibrio gigas</name>
    <name type="common">Desulfovibrio gigas</name>
    <dbReference type="NCBI Taxonomy" id="879"/>
    <lineage>
        <taxon>Bacteria</taxon>
        <taxon>Pseudomonadati</taxon>
        <taxon>Thermodesulfobacteriota</taxon>
        <taxon>Desulfovibrionia</taxon>
        <taxon>Desulfovibrionales</taxon>
        <taxon>Desulfovibrionaceae</taxon>
        <taxon>Megalodesulfovibrio</taxon>
    </lineage>
</organism>
<reference key="1">
    <citation type="submission" date="1997-11" db="EMBL/GenBank/DDBJ databases">
        <authorList>
            <person name="Shenvi N.V."/>
            <person name="Kurtz D.M. Jr."/>
        </authorList>
    </citation>
    <scope>NUCLEOTIDE SEQUENCE [GENOMIC DNA]</scope>
</reference>
<reference key="2">
    <citation type="journal article" date="1999" name="Eur. J. Biochem.">
        <title>Desulfovibrio gigas neelaredoxin. A novel superoxide dismutase integrated in a putative oxygen sensory operon of an anaerobe.</title>
        <authorList>
            <person name="Silva G."/>
            <person name="Oliveira S."/>
            <person name="Gomes C.M."/>
            <person name="Pacheco I."/>
            <person name="Liu M.Y."/>
            <person name="Xavier A.V."/>
            <person name="Teixeira M."/>
            <person name="LeGall J."/>
            <person name="Rodrigues-Pousada C."/>
        </authorList>
    </citation>
    <scope>NUCLEOTIDE SEQUENCE [GENOMIC DNA]</scope>
    <scope>CHARACTERIZATION</scope>
    <source>
        <strain>ATCC 19364 / DSM 1382 / NCIB 9332 / VKM B-1759</strain>
    </source>
</reference>
<reference key="3">
    <citation type="journal article" date="1994" name="Eur. J. Biochem.">
        <title>A blue non-heme iron protein from Desulfovibrio gigas.</title>
        <authorList>
            <person name="Chen L."/>
            <person name="Sharma P."/>
            <person name="le Gall J."/>
            <person name="Mariano A.M."/>
            <person name="Teixeira M."/>
            <person name="Xavier A.V."/>
        </authorList>
    </citation>
    <scope>PROTEIN SEQUENCE OF 1-28</scope>
    <source>
        <strain>ATCC 19364 / DSM 1382 / NCIB 9332 / VKM B-1759</strain>
    </source>
</reference>
<sequence length="130" mass="14523">MKMCDMFQTADWKTEKHVPAIECDDAVAADAFFPVTVSLGKEIAHPNTTEHHIRWIRCYFKPEGDKFSYEVGSFEFTAHGECAKGPNEGPVYTNHTVTFQLKIKTPGVLVASSFCNIHGLWESSKAVALK</sequence>
<protein>
    <recommendedName>
        <fullName>Neelaredoxin</fullName>
        <ecNumber>1.15.1.1</ecNumber>
    </recommendedName>
    <alternativeName>
        <fullName>Superoxide dismutase</fullName>
    </alternativeName>
</protein>
<feature type="chain" id="PRO_0000140869" description="Neelaredoxin">
    <location>
        <begin position="1"/>
        <end position="130"/>
    </location>
</feature>
<feature type="binding site" evidence="1">
    <location>
        <position position="15"/>
    </location>
    <ligand>
        <name>Fe cation</name>
        <dbReference type="ChEBI" id="CHEBI:24875"/>
    </ligand>
</feature>
<feature type="binding site" evidence="1">
    <location>
        <position position="17"/>
    </location>
    <ligand>
        <name>Fe cation</name>
        <dbReference type="ChEBI" id="CHEBI:24875"/>
    </ligand>
</feature>
<feature type="binding site" evidence="1">
    <location>
        <position position="45"/>
    </location>
    <ligand>
        <name>Fe cation</name>
        <dbReference type="ChEBI" id="CHEBI:24875"/>
    </ligand>
</feature>
<feature type="binding site" evidence="1">
    <location>
        <position position="51"/>
    </location>
    <ligand>
        <name>Fe cation</name>
        <dbReference type="ChEBI" id="CHEBI:24875"/>
    </ligand>
</feature>
<feature type="binding site" evidence="1">
    <location>
        <position position="115"/>
    </location>
    <ligand>
        <name>Fe cation</name>
        <dbReference type="ChEBI" id="CHEBI:24875"/>
    </ligand>
</feature>
<feature type="binding site" evidence="1">
    <location>
        <position position="118"/>
    </location>
    <ligand>
        <name>Fe cation</name>
        <dbReference type="ChEBI" id="CHEBI:24875"/>
    </ligand>
</feature>
<feature type="sequence conflict" description="In Ref. 3; AA sequence." evidence="2" ref="3">
    <original>C</original>
    <variation>Y</variation>
    <location>
        <position position="4"/>
    </location>
</feature>
<dbReference type="EC" id="1.15.1.1"/>
<dbReference type="EMBL" id="AF034965">
    <property type="protein sequence ID" value="AAB87989.1"/>
    <property type="molecule type" value="Genomic_DNA"/>
</dbReference>
<dbReference type="EMBL" id="AF096317">
    <property type="protein sequence ID" value="AAD13200.1"/>
    <property type="molecule type" value="Genomic_DNA"/>
</dbReference>
<dbReference type="SMR" id="O50258"/>
<dbReference type="OMA" id="EHHIAWI"/>
<dbReference type="GO" id="GO:0005506">
    <property type="term" value="F:iron ion binding"/>
    <property type="evidence" value="ECO:0007669"/>
    <property type="project" value="InterPro"/>
</dbReference>
<dbReference type="GO" id="GO:0004784">
    <property type="term" value="F:superoxide dismutase activity"/>
    <property type="evidence" value="ECO:0007669"/>
    <property type="project" value="UniProtKB-EC"/>
</dbReference>
<dbReference type="CDD" id="cd03172">
    <property type="entry name" value="SORL_classII"/>
    <property type="match status" value="1"/>
</dbReference>
<dbReference type="Gene3D" id="2.60.40.730">
    <property type="entry name" value="SOR catalytic domain"/>
    <property type="match status" value="1"/>
</dbReference>
<dbReference type="InterPro" id="IPR002742">
    <property type="entry name" value="Desulfoferrodoxin_Fe-bd_dom"/>
</dbReference>
<dbReference type="InterPro" id="IPR036073">
    <property type="entry name" value="Desulfoferrodoxin_Fe-bd_dom_sf"/>
</dbReference>
<dbReference type="InterPro" id="IPR051233">
    <property type="entry name" value="Desulfoferrodoxin_SOR"/>
</dbReference>
<dbReference type="NCBIfam" id="TIGR00332">
    <property type="entry name" value="neela_ferrous"/>
    <property type="match status" value="1"/>
</dbReference>
<dbReference type="PANTHER" id="PTHR36541">
    <property type="entry name" value="SUPEROXIDE REDUCTASE-RELATED"/>
    <property type="match status" value="1"/>
</dbReference>
<dbReference type="PANTHER" id="PTHR36541:SF1">
    <property type="entry name" value="SUPEROXIDE REDUCTASE-RELATED"/>
    <property type="match status" value="1"/>
</dbReference>
<dbReference type="Pfam" id="PF01880">
    <property type="entry name" value="Desulfoferrodox"/>
    <property type="match status" value="1"/>
</dbReference>
<dbReference type="SUPFAM" id="SSF49367">
    <property type="entry name" value="Superoxide reductase-like"/>
    <property type="match status" value="1"/>
</dbReference>
<keyword id="KW-0903">Direct protein sequencing</keyword>
<keyword id="KW-0249">Electron transport</keyword>
<keyword id="KW-0408">Iron</keyword>
<keyword id="KW-0479">Metal-binding</keyword>
<keyword id="KW-0560">Oxidoreductase</keyword>
<keyword id="KW-0813">Transport</keyword>
<proteinExistence type="evidence at protein level"/>
<gene>
    <name type="primary">nlr</name>
</gene>
<name>NLR_MEGGA</name>
<comment type="function">
    <text>Non-heme iron protein.</text>
</comment>
<comment type="catalytic activity">
    <reaction>
        <text>2 superoxide + 2 H(+) = H2O2 + O2</text>
        <dbReference type="Rhea" id="RHEA:20696"/>
        <dbReference type="ChEBI" id="CHEBI:15378"/>
        <dbReference type="ChEBI" id="CHEBI:15379"/>
        <dbReference type="ChEBI" id="CHEBI:16240"/>
        <dbReference type="ChEBI" id="CHEBI:18421"/>
        <dbReference type="EC" id="1.15.1.1"/>
    </reaction>
</comment>
<comment type="cofactor">
    <cofactor>
        <name>Fe cation</name>
        <dbReference type="ChEBI" id="CHEBI:24875"/>
    </cofactor>
    <text>Binds 2 iron ions per subunit.</text>
</comment>
<comment type="subunit">
    <text>Monomer.</text>
</comment>
<comment type="miscellaneous">
    <text>Has a reduction potential of +190 mV.</text>
</comment>
<comment type="similarity">
    <text evidence="2">Belongs to the desulfoferrodoxin family.</text>
</comment>
<accession>O50258</accession>